<feature type="chain" id="PRO_0000229407" description="GMP synthase [glutamine-hydrolyzing]">
    <location>
        <begin position="1"/>
        <end position="525"/>
    </location>
</feature>
<feature type="domain" description="Glutamine amidotransferase type-1" evidence="1">
    <location>
        <begin position="7"/>
        <end position="207"/>
    </location>
</feature>
<feature type="domain" description="GMPS ATP-PPase" evidence="1">
    <location>
        <begin position="208"/>
        <end position="400"/>
    </location>
</feature>
<feature type="active site" description="Nucleophile" evidence="1">
    <location>
        <position position="84"/>
    </location>
</feature>
<feature type="active site" evidence="1">
    <location>
        <position position="181"/>
    </location>
</feature>
<feature type="active site" evidence="1">
    <location>
        <position position="183"/>
    </location>
</feature>
<feature type="binding site" evidence="1">
    <location>
        <begin position="235"/>
        <end position="241"/>
    </location>
    <ligand>
        <name>ATP</name>
        <dbReference type="ChEBI" id="CHEBI:30616"/>
    </ligand>
</feature>
<keyword id="KW-0067">ATP-binding</keyword>
<keyword id="KW-0315">Glutamine amidotransferase</keyword>
<keyword id="KW-0332">GMP biosynthesis</keyword>
<keyword id="KW-0436">Ligase</keyword>
<keyword id="KW-0547">Nucleotide-binding</keyword>
<keyword id="KW-0658">Purine biosynthesis</keyword>
<keyword id="KW-1185">Reference proteome</keyword>
<comment type="function">
    <text evidence="1">Catalyzes the synthesis of GMP from XMP.</text>
</comment>
<comment type="catalytic activity">
    <reaction evidence="1">
        <text>XMP + L-glutamine + ATP + H2O = GMP + L-glutamate + AMP + diphosphate + 2 H(+)</text>
        <dbReference type="Rhea" id="RHEA:11680"/>
        <dbReference type="ChEBI" id="CHEBI:15377"/>
        <dbReference type="ChEBI" id="CHEBI:15378"/>
        <dbReference type="ChEBI" id="CHEBI:29985"/>
        <dbReference type="ChEBI" id="CHEBI:30616"/>
        <dbReference type="ChEBI" id="CHEBI:33019"/>
        <dbReference type="ChEBI" id="CHEBI:57464"/>
        <dbReference type="ChEBI" id="CHEBI:58115"/>
        <dbReference type="ChEBI" id="CHEBI:58359"/>
        <dbReference type="ChEBI" id="CHEBI:456215"/>
        <dbReference type="EC" id="6.3.5.2"/>
    </reaction>
</comment>
<comment type="pathway">
    <text evidence="1">Purine metabolism; GMP biosynthesis; GMP from XMP (L-Gln route): step 1/1.</text>
</comment>
<comment type="subunit">
    <text evidence="1">Homodimer.</text>
</comment>
<organism>
    <name type="scientific">Blochmanniella pennsylvanica (strain BPEN)</name>
    <dbReference type="NCBI Taxonomy" id="291272"/>
    <lineage>
        <taxon>Bacteria</taxon>
        <taxon>Pseudomonadati</taxon>
        <taxon>Pseudomonadota</taxon>
        <taxon>Gammaproteobacteria</taxon>
        <taxon>Enterobacterales</taxon>
        <taxon>Enterobacteriaceae</taxon>
        <taxon>ant endosymbionts</taxon>
        <taxon>Candidatus Blochmanniella</taxon>
    </lineage>
</organism>
<gene>
    <name evidence="1" type="primary">guaA</name>
    <name type="ordered locus">BPEN_546</name>
</gene>
<dbReference type="EC" id="6.3.5.2" evidence="1"/>
<dbReference type="EMBL" id="CP000016">
    <property type="protein sequence ID" value="AAZ41156.1"/>
    <property type="molecule type" value="Genomic_DNA"/>
</dbReference>
<dbReference type="RefSeq" id="WP_011283067.1">
    <property type="nucleotide sequence ID" value="NC_007292.1"/>
</dbReference>
<dbReference type="SMR" id="Q492E5"/>
<dbReference type="STRING" id="291272.BPEN_546"/>
<dbReference type="KEGG" id="bpn:BPEN_546"/>
<dbReference type="eggNOG" id="COG0518">
    <property type="taxonomic scope" value="Bacteria"/>
</dbReference>
<dbReference type="eggNOG" id="COG0519">
    <property type="taxonomic scope" value="Bacteria"/>
</dbReference>
<dbReference type="HOGENOM" id="CLU_014340_0_5_6"/>
<dbReference type="OrthoDB" id="9802219at2"/>
<dbReference type="UniPathway" id="UPA00189">
    <property type="reaction ID" value="UER00296"/>
</dbReference>
<dbReference type="Proteomes" id="UP000007794">
    <property type="component" value="Chromosome"/>
</dbReference>
<dbReference type="GO" id="GO:0005829">
    <property type="term" value="C:cytosol"/>
    <property type="evidence" value="ECO:0007669"/>
    <property type="project" value="TreeGrafter"/>
</dbReference>
<dbReference type="GO" id="GO:0005524">
    <property type="term" value="F:ATP binding"/>
    <property type="evidence" value="ECO:0007669"/>
    <property type="project" value="UniProtKB-UniRule"/>
</dbReference>
<dbReference type="GO" id="GO:0003921">
    <property type="term" value="F:GMP synthase activity"/>
    <property type="evidence" value="ECO:0007669"/>
    <property type="project" value="InterPro"/>
</dbReference>
<dbReference type="CDD" id="cd01742">
    <property type="entry name" value="GATase1_GMP_Synthase"/>
    <property type="match status" value="1"/>
</dbReference>
<dbReference type="CDD" id="cd01997">
    <property type="entry name" value="GMP_synthase_C"/>
    <property type="match status" value="1"/>
</dbReference>
<dbReference type="FunFam" id="3.30.300.10:FF:000002">
    <property type="entry name" value="GMP synthase [glutamine-hydrolyzing]"/>
    <property type="match status" value="1"/>
</dbReference>
<dbReference type="FunFam" id="3.40.50.880:FF:000001">
    <property type="entry name" value="GMP synthase [glutamine-hydrolyzing]"/>
    <property type="match status" value="1"/>
</dbReference>
<dbReference type="Gene3D" id="3.30.300.10">
    <property type="match status" value="1"/>
</dbReference>
<dbReference type="Gene3D" id="3.40.50.880">
    <property type="match status" value="1"/>
</dbReference>
<dbReference type="Gene3D" id="3.40.50.620">
    <property type="entry name" value="HUPs"/>
    <property type="match status" value="1"/>
</dbReference>
<dbReference type="HAMAP" id="MF_00344">
    <property type="entry name" value="GMP_synthase"/>
    <property type="match status" value="1"/>
</dbReference>
<dbReference type="InterPro" id="IPR029062">
    <property type="entry name" value="Class_I_gatase-like"/>
</dbReference>
<dbReference type="InterPro" id="IPR017926">
    <property type="entry name" value="GATASE"/>
</dbReference>
<dbReference type="InterPro" id="IPR001674">
    <property type="entry name" value="GMP_synth_C"/>
</dbReference>
<dbReference type="InterPro" id="IPR004739">
    <property type="entry name" value="GMP_synth_GATase"/>
</dbReference>
<dbReference type="InterPro" id="IPR022955">
    <property type="entry name" value="GMP_synthase"/>
</dbReference>
<dbReference type="InterPro" id="IPR025777">
    <property type="entry name" value="GMPS_ATP_PPase_dom"/>
</dbReference>
<dbReference type="InterPro" id="IPR022310">
    <property type="entry name" value="NAD/GMP_synthase"/>
</dbReference>
<dbReference type="InterPro" id="IPR014729">
    <property type="entry name" value="Rossmann-like_a/b/a_fold"/>
</dbReference>
<dbReference type="NCBIfam" id="TIGR00884">
    <property type="entry name" value="guaA_Cterm"/>
    <property type="match status" value="1"/>
</dbReference>
<dbReference type="NCBIfam" id="TIGR00888">
    <property type="entry name" value="guaA_Nterm"/>
    <property type="match status" value="1"/>
</dbReference>
<dbReference type="NCBIfam" id="NF000848">
    <property type="entry name" value="PRK00074.1"/>
    <property type="match status" value="1"/>
</dbReference>
<dbReference type="PANTHER" id="PTHR11922:SF2">
    <property type="entry name" value="GMP SYNTHASE [GLUTAMINE-HYDROLYZING]"/>
    <property type="match status" value="1"/>
</dbReference>
<dbReference type="PANTHER" id="PTHR11922">
    <property type="entry name" value="GMP SYNTHASE-RELATED"/>
    <property type="match status" value="1"/>
</dbReference>
<dbReference type="Pfam" id="PF00117">
    <property type="entry name" value="GATase"/>
    <property type="match status" value="1"/>
</dbReference>
<dbReference type="Pfam" id="PF00958">
    <property type="entry name" value="GMP_synt_C"/>
    <property type="match status" value="1"/>
</dbReference>
<dbReference type="Pfam" id="PF02540">
    <property type="entry name" value="NAD_synthase"/>
    <property type="match status" value="1"/>
</dbReference>
<dbReference type="PRINTS" id="PR00097">
    <property type="entry name" value="ANTSNTHASEII"/>
</dbReference>
<dbReference type="PRINTS" id="PR00099">
    <property type="entry name" value="CPSGATASE"/>
</dbReference>
<dbReference type="PRINTS" id="PR00096">
    <property type="entry name" value="GATASE"/>
</dbReference>
<dbReference type="SUPFAM" id="SSF52402">
    <property type="entry name" value="Adenine nucleotide alpha hydrolases-like"/>
    <property type="match status" value="1"/>
</dbReference>
<dbReference type="SUPFAM" id="SSF52317">
    <property type="entry name" value="Class I glutamine amidotransferase-like"/>
    <property type="match status" value="1"/>
</dbReference>
<dbReference type="SUPFAM" id="SSF54810">
    <property type="entry name" value="GMP synthetase C-terminal dimerisation domain"/>
    <property type="match status" value="1"/>
</dbReference>
<dbReference type="PROSITE" id="PS51273">
    <property type="entry name" value="GATASE_TYPE_1"/>
    <property type="match status" value="1"/>
</dbReference>
<dbReference type="PROSITE" id="PS51553">
    <property type="entry name" value="GMPS_ATP_PPASE"/>
    <property type="match status" value="1"/>
</dbReference>
<sequence length="525" mass="59964">MKCNNHRILVIDFGSQYTQLLLRRIRELGVYSESCSWNISKSQVYAFNPNGIILSGGPYSVIDNDSPYIPEFVFQLGIPIFGICYGMQIMSFQLGGRVERVIAQREFGCTQVTILSKSVFINDIYDYVDDVTGRFALDVWMSHGDVVTTVPKDFTVIGVNKYRQVAMMANEDRHLYGVQFHPEVTHTKKGKSILERFITCICRCKSSWKIANIIDDIVMDTRVKVGNDKVVLGFSGGIDSLVTALLLRRAIGHQFICIYIDNGLLSNYEFDRIKNFCALNCNLDIIYLSQEQRFFNALIGVNDPEKKRKIIGRVFTEVFEEQIRNLVAVKWLAQGTIYSDVIESGVSLSSFKNVIKSHHNVGGFCGITDIQLLEPIRNLFKDEVRSIGLDLGIPYDIAYRHPFPGPGLAIRILGEVKKEYCDILRRVDFIFIEELKREHLYSKISQAFAVFLPTHSVGIQGDQRKYKWVIALRAVETIDFMTAHWAYLSYDFLNKVSNRIVNEVEEVSRVVYDISSKPPATIEWE</sequence>
<proteinExistence type="inferred from homology"/>
<evidence type="ECO:0000255" key="1">
    <source>
        <dbReference type="HAMAP-Rule" id="MF_00344"/>
    </source>
</evidence>
<accession>Q492E5</accession>
<protein>
    <recommendedName>
        <fullName evidence="1">GMP synthase [glutamine-hydrolyzing]</fullName>
        <ecNumber evidence="1">6.3.5.2</ecNumber>
    </recommendedName>
    <alternativeName>
        <fullName evidence="1">GMP synthetase</fullName>
    </alternativeName>
    <alternativeName>
        <fullName evidence="1">Glutamine amidotransferase</fullName>
    </alternativeName>
</protein>
<reference key="1">
    <citation type="journal article" date="2005" name="Genome Res.">
        <title>Genome sequence of Blochmannia pennsylvanicus indicates parallel evolutionary trends among bacterial mutualists of insects.</title>
        <authorList>
            <person name="Degnan P.H."/>
            <person name="Lazarus A.B."/>
            <person name="Wernegreen J.J."/>
        </authorList>
    </citation>
    <scope>NUCLEOTIDE SEQUENCE [LARGE SCALE GENOMIC DNA]</scope>
    <source>
        <strain>BPEN</strain>
    </source>
</reference>
<name>GUAA_BLOPB</name>